<organism>
    <name type="scientific">Ureaplasma urealyticum serovar 10 (strain ATCC 33699 / Western)</name>
    <dbReference type="NCBI Taxonomy" id="565575"/>
    <lineage>
        <taxon>Bacteria</taxon>
        <taxon>Bacillati</taxon>
        <taxon>Mycoplasmatota</taxon>
        <taxon>Mycoplasmoidales</taxon>
        <taxon>Mycoplasmoidaceae</taxon>
        <taxon>Ureaplasma</taxon>
    </lineage>
</organism>
<dbReference type="EMBL" id="CP001184">
    <property type="protein sequence ID" value="ACI60356.1"/>
    <property type="molecule type" value="Genomic_DNA"/>
</dbReference>
<dbReference type="RefSeq" id="WP_004025683.1">
    <property type="nucleotide sequence ID" value="NC_011374.1"/>
</dbReference>
<dbReference type="SMR" id="B5ZB54"/>
<dbReference type="STRING" id="565575.UUR10_0240"/>
<dbReference type="GeneID" id="93848720"/>
<dbReference type="KEGG" id="uue:UUR10_0240"/>
<dbReference type="eggNOG" id="COG0096">
    <property type="taxonomic scope" value="Bacteria"/>
</dbReference>
<dbReference type="HOGENOM" id="CLU_098428_0_2_14"/>
<dbReference type="OrthoDB" id="9802617at2"/>
<dbReference type="Proteomes" id="UP000002018">
    <property type="component" value="Chromosome"/>
</dbReference>
<dbReference type="GO" id="GO:1990904">
    <property type="term" value="C:ribonucleoprotein complex"/>
    <property type="evidence" value="ECO:0007669"/>
    <property type="project" value="UniProtKB-KW"/>
</dbReference>
<dbReference type="GO" id="GO:0005840">
    <property type="term" value="C:ribosome"/>
    <property type="evidence" value="ECO:0007669"/>
    <property type="project" value="UniProtKB-KW"/>
</dbReference>
<dbReference type="GO" id="GO:0019843">
    <property type="term" value="F:rRNA binding"/>
    <property type="evidence" value="ECO:0007669"/>
    <property type="project" value="UniProtKB-UniRule"/>
</dbReference>
<dbReference type="GO" id="GO:0003735">
    <property type="term" value="F:structural constituent of ribosome"/>
    <property type="evidence" value="ECO:0007669"/>
    <property type="project" value="InterPro"/>
</dbReference>
<dbReference type="GO" id="GO:0006412">
    <property type="term" value="P:translation"/>
    <property type="evidence" value="ECO:0007669"/>
    <property type="project" value="UniProtKB-UniRule"/>
</dbReference>
<dbReference type="FunFam" id="3.30.1490.10:FF:000001">
    <property type="entry name" value="30S ribosomal protein S8"/>
    <property type="match status" value="1"/>
</dbReference>
<dbReference type="Gene3D" id="3.30.1370.30">
    <property type="match status" value="1"/>
</dbReference>
<dbReference type="Gene3D" id="3.30.1490.10">
    <property type="match status" value="1"/>
</dbReference>
<dbReference type="HAMAP" id="MF_01302_B">
    <property type="entry name" value="Ribosomal_uS8_B"/>
    <property type="match status" value="1"/>
</dbReference>
<dbReference type="InterPro" id="IPR000630">
    <property type="entry name" value="Ribosomal_uS8"/>
</dbReference>
<dbReference type="InterPro" id="IPR047863">
    <property type="entry name" value="Ribosomal_uS8_CS"/>
</dbReference>
<dbReference type="InterPro" id="IPR035987">
    <property type="entry name" value="Ribosomal_uS8_sf"/>
</dbReference>
<dbReference type="NCBIfam" id="NF001109">
    <property type="entry name" value="PRK00136.1"/>
    <property type="match status" value="1"/>
</dbReference>
<dbReference type="PANTHER" id="PTHR11758">
    <property type="entry name" value="40S RIBOSOMAL PROTEIN S15A"/>
    <property type="match status" value="1"/>
</dbReference>
<dbReference type="Pfam" id="PF00410">
    <property type="entry name" value="Ribosomal_S8"/>
    <property type="match status" value="1"/>
</dbReference>
<dbReference type="SUPFAM" id="SSF56047">
    <property type="entry name" value="Ribosomal protein S8"/>
    <property type="match status" value="1"/>
</dbReference>
<dbReference type="PROSITE" id="PS00053">
    <property type="entry name" value="RIBOSOMAL_S8"/>
    <property type="match status" value="1"/>
</dbReference>
<sequence length="132" mass="14681">MYLDPIAELITKINNGRKAHKAEVSFATSKLKTAILELLVKEGYIKSYDIRPTENNKSETVVKLKYKNQTTSSINGFKQISKPGLRIYSTHLNLPKVLNGLGIAIITTSKGVMSDKQARKENVGGEVIAYVW</sequence>
<evidence type="ECO:0000255" key="1">
    <source>
        <dbReference type="HAMAP-Rule" id="MF_01302"/>
    </source>
</evidence>
<evidence type="ECO:0000305" key="2"/>
<accession>B5ZB54</accession>
<reference key="1">
    <citation type="submission" date="2008-10" db="EMBL/GenBank/DDBJ databases">
        <title>Genome sequence of Ureaplasma urealyticum serovar 10 ATCC-33699.</title>
        <authorList>
            <person name="Shrivastava S."/>
            <person name="Methe B.A."/>
            <person name="Glass J."/>
            <person name="White K."/>
            <person name="Duffy L.B."/>
        </authorList>
    </citation>
    <scope>NUCLEOTIDE SEQUENCE [LARGE SCALE GENOMIC DNA]</scope>
    <source>
        <strain>ATCC 33699 / Western</strain>
    </source>
</reference>
<gene>
    <name evidence="1" type="primary">rpsH</name>
    <name type="ordered locus">UUR10_0240</name>
</gene>
<comment type="function">
    <text evidence="1">One of the primary rRNA binding proteins, it binds directly to 16S rRNA central domain where it helps coordinate assembly of the platform of the 30S subunit.</text>
</comment>
<comment type="subunit">
    <text evidence="1">Part of the 30S ribosomal subunit. Contacts proteins S5 and S12.</text>
</comment>
<comment type="similarity">
    <text evidence="1">Belongs to the universal ribosomal protein uS8 family.</text>
</comment>
<protein>
    <recommendedName>
        <fullName evidence="1">Small ribosomal subunit protein uS8</fullName>
    </recommendedName>
    <alternativeName>
        <fullName evidence="2">30S ribosomal protein S8</fullName>
    </alternativeName>
</protein>
<feature type="chain" id="PRO_1000140634" description="Small ribosomal subunit protein uS8">
    <location>
        <begin position="1"/>
        <end position="132"/>
    </location>
</feature>
<proteinExistence type="inferred from homology"/>
<name>RS8_UREU1</name>
<keyword id="KW-0687">Ribonucleoprotein</keyword>
<keyword id="KW-0689">Ribosomal protein</keyword>
<keyword id="KW-0694">RNA-binding</keyword>
<keyword id="KW-0699">rRNA-binding</keyword>